<keyword id="KW-0025">Alternative splicing</keyword>
<keyword id="KW-0963">Cytoplasm</keyword>
<keyword id="KW-1017">Isopeptide bond</keyword>
<keyword id="KW-0539">Nucleus</keyword>
<keyword id="KW-1185">Reference proteome</keyword>
<keyword id="KW-0832">Ubl conjugation</keyword>
<keyword id="KW-0833">Ubl conjugation pathway</keyword>
<gene>
    <name evidence="9" type="primary">Sumo3</name>
    <name evidence="7" type="synonym">Smt3a</name>
    <name evidence="9" type="synonym">Smt3h1</name>
</gene>
<accession>Q9Z172</accession>
<accession>Q14C17</accession>
<accession>Q3TBL9</accession>
<accession>Q3UDI5</accession>
<organism>
    <name type="scientific">Mus musculus</name>
    <name type="common">Mouse</name>
    <dbReference type="NCBI Taxonomy" id="10090"/>
    <lineage>
        <taxon>Eukaryota</taxon>
        <taxon>Metazoa</taxon>
        <taxon>Chordata</taxon>
        <taxon>Craniata</taxon>
        <taxon>Vertebrata</taxon>
        <taxon>Euteleostomi</taxon>
        <taxon>Mammalia</taxon>
        <taxon>Eutheria</taxon>
        <taxon>Euarchontoglires</taxon>
        <taxon>Glires</taxon>
        <taxon>Rodentia</taxon>
        <taxon>Myomorpha</taxon>
        <taxon>Muroidea</taxon>
        <taxon>Muridae</taxon>
        <taxon>Murinae</taxon>
        <taxon>Mus</taxon>
        <taxon>Mus</taxon>
    </lineage>
</organism>
<feature type="chain" id="PRO_0000035959" description="Small ubiquitin-related modifier 3">
    <location>
        <begin position="1"/>
        <end position="92"/>
    </location>
</feature>
<feature type="propeptide" id="PRO_0000035960" evidence="1">
    <location>
        <begin position="93"/>
        <end position="110"/>
    </location>
</feature>
<feature type="domain" description="Ubiquitin-like" evidence="3">
    <location>
        <begin position="15"/>
        <end position="92"/>
    </location>
</feature>
<feature type="region of interest" description="Disordered" evidence="4">
    <location>
        <begin position="88"/>
        <end position="110"/>
    </location>
</feature>
<feature type="compositionally biased region" description="Polar residues" evidence="4">
    <location>
        <begin position="88"/>
        <end position="101"/>
    </location>
</feature>
<feature type="cross-link" description="Glycyl lysine isopeptide (Lys-Gly) (interchain with G-Cter in SUMO2)" evidence="2">
    <location>
        <position position="5"/>
    </location>
</feature>
<feature type="cross-link" description="Glycyl lysine isopeptide (Lys-Gly) (interchain with G-Cter in SUMO2)" evidence="2">
    <location>
        <position position="7"/>
    </location>
</feature>
<feature type="cross-link" description="Glycyl lysine isopeptide (Lys-Gly) (interchain with G-Cter in SUMO); alternate" evidence="1">
    <location>
        <position position="11"/>
    </location>
</feature>
<feature type="cross-link" description="Glycyl lysine isopeptide (Lys-Gly) (interchain with G-Cter in SUMO2); alternate" evidence="2">
    <location>
        <position position="11"/>
    </location>
</feature>
<feature type="cross-link" description="Glycyl lysine isopeptide (Gly-Lys) (interchain with K-? in acceptor proteins)" evidence="3">
    <location>
        <position position="92"/>
    </location>
</feature>
<feature type="splice variant" id="VSP_021948" description="In isoform 2." evidence="6">
    <original>MSEEKPK</original>
    <variation>MTTVLAQ</variation>
    <location>
        <begin position="1"/>
        <end position="7"/>
    </location>
</feature>
<evidence type="ECO:0000250" key="1"/>
<evidence type="ECO:0000250" key="2">
    <source>
        <dbReference type="UniProtKB" id="P55854"/>
    </source>
</evidence>
<evidence type="ECO:0000255" key="3">
    <source>
        <dbReference type="PROSITE-ProRule" id="PRU00214"/>
    </source>
</evidence>
<evidence type="ECO:0000256" key="4">
    <source>
        <dbReference type="SAM" id="MobiDB-lite"/>
    </source>
</evidence>
<evidence type="ECO:0000269" key="5">
    <source>
    </source>
</evidence>
<evidence type="ECO:0000303" key="6">
    <source>
    </source>
</evidence>
<evidence type="ECO:0000303" key="7">
    <source>
    </source>
</evidence>
<evidence type="ECO:0000305" key="8"/>
<evidence type="ECO:0000312" key="9">
    <source>
        <dbReference type="MGI" id="MGI:1336201"/>
    </source>
</evidence>
<comment type="function">
    <text evidence="2">Ubiquitin-like protein which can be covalently attached to target lysines either as a monomer or as a lysine-linked polymer. Does not seem to be involved in protein degradation and may function as an antagonist of ubiquitin in the degradation process. Plays a role in a number of cellular processes such as nuclear transport, DNA replication and repair, mitosis and signal transduction. Covalent attachment to its substrates requires prior activation by the E1 complex SAE1-SAE2 and linkage to the E2 enzyme UBE2I, and can be promoted by an E3 ligase such as PIAS1-4, RANBP2 or CBX4. Plays a role in the regulation of sumoylation status of SETX (By similarity).</text>
</comment>
<comment type="subunit">
    <text evidence="1 5">Interacts with SAE2 and UBE2I. Covalently attached to a number of proteins. Interacts with USP25 (via ts SIM domain); the interaction sumoylates USP25 and inhibits its ubiquitin hydrolyzing activity (By similarity). Interacts with BMAL1.</text>
</comment>
<comment type="subcellular location">
    <subcellularLocation>
        <location evidence="1">Cytoplasm</location>
    </subcellularLocation>
    <subcellularLocation>
        <location evidence="1">Nucleus</location>
    </subcellularLocation>
    <subcellularLocation>
        <location evidence="5">Nucleus</location>
        <location evidence="5">PML body</location>
    </subcellularLocation>
</comment>
<comment type="alternative products">
    <event type="alternative splicing"/>
    <isoform>
        <id>Q9Z172-1</id>
        <name>1</name>
        <sequence type="displayed"/>
    </isoform>
    <isoform>
        <id>Q9Z172-2</id>
        <name>2</name>
        <sequence type="described" ref="VSP_021948"/>
    </isoform>
</comment>
<comment type="PTM">
    <text evidence="1">Polymeric chains can be formed through Lys-11 cross-linking.</text>
</comment>
<comment type="PTM">
    <text evidence="1">Cleavage of precursor form by SENP1, SENP2 or SENP5 is necessary for function.</text>
</comment>
<comment type="similarity">
    <text evidence="8">Belongs to the ubiquitin family. SUMO subfamily.</text>
</comment>
<dbReference type="EMBL" id="AF063847">
    <property type="protein sequence ID" value="AAC99333.1"/>
    <property type="molecule type" value="mRNA"/>
</dbReference>
<dbReference type="EMBL" id="AK012742">
    <property type="protein sequence ID" value="BAB28442.1"/>
    <property type="molecule type" value="mRNA"/>
</dbReference>
<dbReference type="EMBL" id="AK013019">
    <property type="protein sequence ID" value="BAB28601.1"/>
    <property type="molecule type" value="mRNA"/>
</dbReference>
<dbReference type="EMBL" id="AK148306">
    <property type="protein sequence ID" value="BAE28469.1"/>
    <property type="molecule type" value="mRNA"/>
</dbReference>
<dbReference type="EMBL" id="AK150063">
    <property type="protein sequence ID" value="BAE29276.1"/>
    <property type="molecule type" value="mRNA"/>
</dbReference>
<dbReference type="EMBL" id="AK150200">
    <property type="protein sequence ID" value="BAE29374.1"/>
    <property type="molecule type" value="mRNA"/>
</dbReference>
<dbReference type="EMBL" id="AK160169">
    <property type="protein sequence ID" value="BAE35670.1"/>
    <property type="molecule type" value="mRNA"/>
</dbReference>
<dbReference type="EMBL" id="AK162035">
    <property type="protein sequence ID" value="BAE36692.1"/>
    <property type="molecule type" value="mRNA"/>
</dbReference>
<dbReference type="EMBL" id="AK167207">
    <property type="protein sequence ID" value="BAE39334.1"/>
    <property type="molecule type" value="mRNA"/>
</dbReference>
<dbReference type="EMBL" id="AK168988">
    <property type="protein sequence ID" value="BAE40788.1"/>
    <property type="molecule type" value="mRNA"/>
</dbReference>
<dbReference type="EMBL" id="AK171169">
    <property type="protein sequence ID" value="BAE42290.1"/>
    <property type="molecule type" value="mRNA"/>
</dbReference>
<dbReference type="EMBL" id="AK170896">
    <property type="protein sequence ID" value="BAE42100.1"/>
    <property type="molecule type" value="mRNA"/>
</dbReference>
<dbReference type="EMBL" id="BC115488">
    <property type="protein sequence ID" value="AAI15489.1"/>
    <property type="molecule type" value="mRNA"/>
</dbReference>
<dbReference type="EMBL" id="BC115489">
    <property type="protein sequence ID" value="AAI15490.1"/>
    <property type="molecule type" value="mRNA"/>
</dbReference>
<dbReference type="CCDS" id="CCDS23958.1">
    <molecule id="Q9Z172-1"/>
</dbReference>
<dbReference type="CCDS" id="CCDS78843.1">
    <molecule id="Q9Z172-2"/>
</dbReference>
<dbReference type="RefSeq" id="NP_001288600.1">
    <molecule id="Q9Z172-2"/>
    <property type="nucleotide sequence ID" value="NM_001301671.1"/>
</dbReference>
<dbReference type="RefSeq" id="NP_001288601.1">
    <property type="nucleotide sequence ID" value="NM_001301672.1"/>
</dbReference>
<dbReference type="RefSeq" id="NP_001288602.1">
    <property type="nucleotide sequence ID" value="NM_001301673.1"/>
</dbReference>
<dbReference type="RefSeq" id="NP_064313.1">
    <molecule id="Q9Z172-1"/>
    <property type="nucleotide sequence ID" value="NM_019929.4"/>
</dbReference>
<dbReference type="SMR" id="Q9Z172"/>
<dbReference type="BioGRID" id="203358">
    <property type="interactions" value="23"/>
</dbReference>
<dbReference type="FunCoup" id="Q9Z172">
    <property type="interactions" value="3705"/>
</dbReference>
<dbReference type="IntAct" id="Q9Z172">
    <property type="interactions" value="16"/>
</dbReference>
<dbReference type="STRING" id="10090.ENSMUSP00000134416"/>
<dbReference type="GlyGen" id="Q9Z172">
    <property type="glycosylation" value="1 site, 1 O-linked glycan (1 site)"/>
</dbReference>
<dbReference type="iPTMnet" id="Q9Z172"/>
<dbReference type="PhosphoSitePlus" id="Q9Z172"/>
<dbReference type="jPOST" id="Q9Z172"/>
<dbReference type="PaxDb" id="10090-ENSMUSP00000020501"/>
<dbReference type="PeptideAtlas" id="Q9Z172"/>
<dbReference type="ProteomicsDB" id="254694">
    <molecule id="Q9Z172-1"/>
</dbReference>
<dbReference type="ProteomicsDB" id="254695">
    <molecule id="Q9Z172-2"/>
</dbReference>
<dbReference type="Pumba" id="Q9Z172"/>
<dbReference type="DNASU" id="20610"/>
<dbReference type="Ensembl" id="ENSMUST00000020501.15">
    <molecule id="Q9Z172-1"/>
    <property type="protein sequence ID" value="ENSMUSP00000020501.9"/>
    <property type="gene ID" value="ENSMUSG00000020265.17"/>
</dbReference>
<dbReference type="Ensembl" id="ENSMUST00000099538.6">
    <molecule id="Q9Z172-2"/>
    <property type="protein sequence ID" value="ENSMUSP00000097136.6"/>
    <property type="gene ID" value="ENSMUSG00000020265.17"/>
</dbReference>
<dbReference type="GeneID" id="20610"/>
<dbReference type="KEGG" id="mmu:20610"/>
<dbReference type="UCSC" id="uc007fvy.2">
    <molecule id="Q9Z172-1"/>
    <property type="organism name" value="mouse"/>
</dbReference>
<dbReference type="UCSC" id="uc007fvz.2">
    <molecule id="Q9Z172-2"/>
    <property type="organism name" value="mouse"/>
</dbReference>
<dbReference type="AGR" id="MGI:1336201"/>
<dbReference type="CTD" id="6612"/>
<dbReference type="MGI" id="MGI:1336201">
    <property type="gene designation" value="Sumo3"/>
</dbReference>
<dbReference type="VEuPathDB" id="HostDB:ENSMUSG00000020265"/>
<dbReference type="eggNOG" id="KOG1769">
    <property type="taxonomic scope" value="Eukaryota"/>
</dbReference>
<dbReference type="GeneTree" id="ENSGT00950000182895"/>
<dbReference type="HOGENOM" id="CLU_148322_2_1_1"/>
<dbReference type="InParanoid" id="Q9Z172"/>
<dbReference type="OrthoDB" id="9925208at2759"/>
<dbReference type="PhylomeDB" id="Q9Z172"/>
<dbReference type="TreeFam" id="TF315116"/>
<dbReference type="Reactome" id="R-MMU-3065679">
    <property type="pathway name" value="SUMO is proteolytically processed"/>
</dbReference>
<dbReference type="Reactome" id="R-MMU-3108214">
    <property type="pathway name" value="SUMOylation of DNA damage response and repair proteins"/>
</dbReference>
<dbReference type="Reactome" id="R-MMU-3232118">
    <property type="pathway name" value="SUMOylation of transcription factors"/>
</dbReference>
<dbReference type="Reactome" id="R-MMU-3899300">
    <property type="pathway name" value="SUMOylation of transcription cofactors"/>
</dbReference>
<dbReference type="Reactome" id="R-MMU-4090294">
    <property type="pathway name" value="SUMOylation of intracellular receptors"/>
</dbReference>
<dbReference type="Reactome" id="R-MMU-4551638">
    <property type="pathway name" value="SUMOylation of chromatin organization proteins"/>
</dbReference>
<dbReference type="Reactome" id="R-MMU-4615885">
    <property type="pathway name" value="SUMOylation of DNA replication proteins"/>
</dbReference>
<dbReference type="Reactome" id="R-MMU-4755510">
    <property type="pathway name" value="SUMOylation of immune response proteins"/>
</dbReference>
<dbReference type="Reactome" id="R-MMU-5696395">
    <property type="pathway name" value="Formation of Incision Complex in GG-NER"/>
</dbReference>
<dbReference type="BioGRID-ORCS" id="20610">
    <property type="hits" value="2 hits in 74 CRISPR screens"/>
</dbReference>
<dbReference type="ChiTaRS" id="Sumo3">
    <property type="organism name" value="mouse"/>
</dbReference>
<dbReference type="PRO" id="PR:Q9Z172"/>
<dbReference type="Proteomes" id="UP000000589">
    <property type="component" value="Chromosome 10"/>
</dbReference>
<dbReference type="RNAct" id="Q9Z172">
    <property type="molecule type" value="protein"/>
</dbReference>
<dbReference type="Bgee" id="ENSMUSG00000020265">
    <property type="expression patterns" value="Expressed in embryonic brain and 81 other cell types or tissues"/>
</dbReference>
<dbReference type="ExpressionAtlas" id="Q9Z172">
    <property type="expression patterns" value="baseline and differential"/>
</dbReference>
<dbReference type="GO" id="GO:0098978">
    <property type="term" value="C:glutamatergic synapse"/>
    <property type="evidence" value="ECO:0000314"/>
    <property type="project" value="SynGO"/>
</dbReference>
<dbReference type="GO" id="GO:0016604">
    <property type="term" value="C:nuclear body"/>
    <property type="evidence" value="ECO:0000314"/>
    <property type="project" value="MGI"/>
</dbReference>
<dbReference type="GO" id="GO:0005654">
    <property type="term" value="C:nucleoplasm"/>
    <property type="evidence" value="ECO:0000304"/>
    <property type="project" value="Reactome"/>
</dbReference>
<dbReference type="GO" id="GO:0016605">
    <property type="term" value="C:PML body"/>
    <property type="evidence" value="ECO:0000250"/>
    <property type="project" value="UniProtKB"/>
</dbReference>
<dbReference type="GO" id="GO:0099524">
    <property type="term" value="C:postsynaptic cytosol"/>
    <property type="evidence" value="ECO:0000314"/>
    <property type="project" value="SynGO"/>
</dbReference>
<dbReference type="GO" id="GO:0099523">
    <property type="term" value="C:presynaptic cytosol"/>
    <property type="evidence" value="ECO:0000314"/>
    <property type="project" value="SynGO"/>
</dbReference>
<dbReference type="GO" id="GO:0019789">
    <property type="term" value="F:SUMO transferase activity"/>
    <property type="evidence" value="ECO:0000314"/>
    <property type="project" value="MGI"/>
</dbReference>
<dbReference type="GO" id="GO:2000060">
    <property type="term" value="P:positive regulation of ubiquitin-dependent protein catabolic process"/>
    <property type="evidence" value="ECO:0000314"/>
    <property type="project" value="MGI"/>
</dbReference>
<dbReference type="GO" id="GO:0034504">
    <property type="term" value="P:protein localization to nucleus"/>
    <property type="evidence" value="ECO:0000314"/>
    <property type="project" value="MGI"/>
</dbReference>
<dbReference type="GO" id="GO:0016925">
    <property type="term" value="P:protein sumoylation"/>
    <property type="evidence" value="ECO:0000314"/>
    <property type="project" value="MGI"/>
</dbReference>
<dbReference type="CDD" id="cd16115">
    <property type="entry name" value="Ubl_SUMO2_3_4"/>
    <property type="match status" value="1"/>
</dbReference>
<dbReference type="FunFam" id="3.10.20.90:FF:000022">
    <property type="entry name" value="Small ubiquitin-related modifier"/>
    <property type="match status" value="1"/>
</dbReference>
<dbReference type="Gene3D" id="3.10.20.90">
    <property type="entry name" value="Phosphatidylinositol 3-kinase Catalytic Subunit, Chain A, domain 1"/>
    <property type="match status" value="1"/>
</dbReference>
<dbReference type="InterPro" id="IPR022617">
    <property type="entry name" value="Rad60/SUMO-like_dom"/>
</dbReference>
<dbReference type="InterPro" id="IPR000626">
    <property type="entry name" value="Ubiquitin-like_dom"/>
</dbReference>
<dbReference type="InterPro" id="IPR029071">
    <property type="entry name" value="Ubiquitin-like_domsf"/>
</dbReference>
<dbReference type="PANTHER" id="PTHR10562">
    <property type="entry name" value="SMALL UBIQUITIN-RELATED MODIFIER"/>
    <property type="match status" value="1"/>
</dbReference>
<dbReference type="Pfam" id="PF11976">
    <property type="entry name" value="Rad60-SLD"/>
    <property type="match status" value="1"/>
</dbReference>
<dbReference type="SMART" id="SM00213">
    <property type="entry name" value="UBQ"/>
    <property type="match status" value="1"/>
</dbReference>
<dbReference type="SUPFAM" id="SSF54236">
    <property type="entry name" value="Ubiquitin-like"/>
    <property type="match status" value="1"/>
</dbReference>
<dbReference type="PROSITE" id="PS50053">
    <property type="entry name" value="UBIQUITIN_2"/>
    <property type="match status" value="1"/>
</dbReference>
<proteinExistence type="evidence at protein level"/>
<sequence>MSEEKPKEGVKTENDHINLKVAGQDGSVVQFKIKRHTPLSKLMKAYCERQGLSMRQIRFRFDGQPINETDTPAQLEMEDEDTIDVFQQQTGGSASRGSVPTPNRCPDLCY</sequence>
<name>SUMO3_MOUSE</name>
<reference key="1">
    <citation type="journal article" date="1998" name="Biochem. Mol. Biol. Int.">
        <title>Characterization of mouse ubiquitin-like SMT3A and SMT3B cDNAs and gene/pseudogenes.</title>
        <authorList>
            <person name="Chen A."/>
            <person name="Mannen H."/>
            <person name="Li S.S.-L."/>
        </authorList>
    </citation>
    <scope>NUCLEOTIDE SEQUENCE [MRNA] (ISOFORM 1)</scope>
    <source>
        <tissue>Liver</tissue>
    </source>
</reference>
<reference key="2">
    <citation type="journal article" date="2005" name="Science">
        <title>The transcriptional landscape of the mammalian genome.</title>
        <authorList>
            <person name="Carninci P."/>
            <person name="Kasukawa T."/>
            <person name="Katayama S."/>
            <person name="Gough J."/>
            <person name="Frith M.C."/>
            <person name="Maeda N."/>
            <person name="Oyama R."/>
            <person name="Ravasi T."/>
            <person name="Lenhard B."/>
            <person name="Wells C."/>
            <person name="Kodzius R."/>
            <person name="Shimokawa K."/>
            <person name="Bajic V.B."/>
            <person name="Brenner S.E."/>
            <person name="Batalov S."/>
            <person name="Forrest A.R."/>
            <person name="Zavolan M."/>
            <person name="Davis M.J."/>
            <person name="Wilming L.G."/>
            <person name="Aidinis V."/>
            <person name="Allen J.E."/>
            <person name="Ambesi-Impiombato A."/>
            <person name="Apweiler R."/>
            <person name="Aturaliya R.N."/>
            <person name="Bailey T.L."/>
            <person name="Bansal M."/>
            <person name="Baxter L."/>
            <person name="Beisel K.W."/>
            <person name="Bersano T."/>
            <person name="Bono H."/>
            <person name="Chalk A.M."/>
            <person name="Chiu K.P."/>
            <person name="Choudhary V."/>
            <person name="Christoffels A."/>
            <person name="Clutterbuck D.R."/>
            <person name="Crowe M.L."/>
            <person name="Dalla E."/>
            <person name="Dalrymple B.P."/>
            <person name="de Bono B."/>
            <person name="Della Gatta G."/>
            <person name="di Bernardo D."/>
            <person name="Down T."/>
            <person name="Engstrom P."/>
            <person name="Fagiolini M."/>
            <person name="Faulkner G."/>
            <person name="Fletcher C.F."/>
            <person name="Fukushima T."/>
            <person name="Furuno M."/>
            <person name="Futaki S."/>
            <person name="Gariboldi M."/>
            <person name="Georgii-Hemming P."/>
            <person name="Gingeras T.R."/>
            <person name="Gojobori T."/>
            <person name="Green R.E."/>
            <person name="Gustincich S."/>
            <person name="Harbers M."/>
            <person name="Hayashi Y."/>
            <person name="Hensch T.K."/>
            <person name="Hirokawa N."/>
            <person name="Hill D."/>
            <person name="Huminiecki L."/>
            <person name="Iacono M."/>
            <person name="Ikeo K."/>
            <person name="Iwama A."/>
            <person name="Ishikawa T."/>
            <person name="Jakt M."/>
            <person name="Kanapin A."/>
            <person name="Katoh M."/>
            <person name="Kawasawa Y."/>
            <person name="Kelso J."/>
            <person name="Kitamura H."/>
            <person name="Kitano H."/>
            <person name="Kollias G."/>
            <person name="Krishnan S.P."/>
            <person name="Kruger A."/>
            <person name="Kummerfeld S.K."/>
            <person name="Kurochkin I.V."/>
            <person name="Lareau L.F."/>
            <person name="Lazarevic D."/>
            <person name="Lipovich L."/>
            <person name="Liu J."/>
            <person name="Liuni S."/>
            <person name="McWilliam S."/>
            <person name="Madan Babu M."/>
            <person name="Madera M."/>
            <person name="Marchionni L."/>
            <person name="Matsuda H."/>
            <person name="Matsuzawa S."/>
            <person name="Miki H."/>
            <person name="Mignone F."/>
            <person name="Miyake S."/>
            <person name="Morris K."/>
            <person name="Mottagui-Tabar S."/>
            <person name="Mulder N."/>
            <person name="Nakano N."/>
            <person name="Nakauchi H."/>
            <person name="Ng P."/>
            <person name="Nilsson R."/>
            <person name="Nishiguchi S."/>
            <person name="Nishikawa S."/>
            <person name="Nori F."/>
            <person name="Ohara O."/>
            <person name="Okazaki Y."/>
            <person name="Orlando V."/>
            <person name="Pang K.C."/>
            <person name="Pavan W.J."/>
            <person name="Pavesi G."/>
            <person name="Pesole G."/>
            <person name="Petrovsky N."/>
            <person name="Piazza S."/>
            <person name="Reed J."/>
            <person name="Reid J.F."/>
            <person name="Ring B.Z."/>
            <person name="Ringwald M."/>
            <person name="Rost B."/>
            <person name="Ruan Y."/>
            <person name="Salzberg S.L."/>
            <person name="Sandelin A."/>
            <person name="Schneider C."/>
            <person name="Schoenbach C."/>
            <person name="Sekiguchi K."/>
            <person name="Semple C.A."/>
            <person name="Seno S."/>
            <person name="Sessa L."/>
            <person name="Sheng Y."/>
            <person name="Shibata Y."/>
            <person name="Shimada H."/>
            <person name="Shimada K."/>
            <person name="Silva D."/>
            <person name="Sinclair B."/>
            <person name="Sperling S."/>
            <person name="Stupka E."/>
            <person name="Sugiura K."/>
            <person name="Sultana R."/>
            <person name="Takenaka Y."/>
            <person name="Taki K."/>
            <person name="Tammoja K."/>
            <person name="Tan S.L."/>
            <person name="Tang S."/>
            <person name="Taylor M.S."/>
            <person name="Tegner J."/>
            <person name="Teichmann S.A."/>
            <person name="Ueda H.R."/>
            <person name="van Nimwegen E."/>
            <person name="Verardo R."/>
            <person name="Wei C.L."/>
            <person name="Yagi K."/>
            <person name="Yamanishi H."/>
            <person name="Zabarovsky E."/>
            <person name="Zhu S."/>
            <person name="Zimmer A."/>
            <person name="Hide W."/>
            <person name="Bult C."/>
            <person name="Grimmond S.M."/>
            <person name="Teasdale R.D."/>
            <person name="Liu E.T."/>
            <person name="Brusic V."/>
            <person name="Quackenbush J."/>
            <person name="Wahlestedt C."/>
            <person name="Mattick J.S."/>
            <person name="Hume D.A."/>
            <person name="Kai C."/>
            <person name="Sasaki D."/>
            <person name="Tomaru Y."/>
            <person name="Fukuda S."/>
            <person name="Kanamori-Katayama M."/>
            <person name="Suzuki M."/>
            <person name="Aoki J."/>
            <person name="Arakawa T."/>
            <person name="Iida J."/>
            <person name="Imamura K."/>
            <person name="Itoh M."/>
            <person name="Kato T."/>
            <person name="Kawaji H."/>
            <person name="Kawagashira N."/>
            <person name="Kawashima T."/>
            <person name="Kojima M."/>
            <person name="Kondo S."/>
            <person name="Konno H."/>
            <person name="Nakano K."/>
            <person name="Ninomiya N."/>
            <person name="Nishio T."/>
            <person name="Okada M."/>
            <person name="Plessy C."/>
            <person name="Shibata K."/>
            <person name="Shiraki T."/>
            <person name="Suzuki S."/>
            <person name="Tagami M."/>
            <person name="Waki K."/>
            <person name="Watahiki A."/>
            <person name="Okamura-Oho Y."/>
            <person name="Suzuki H."/>
            <person name="Kawai J."/>
            <person name="Hayashizaki Y."/>
        </authorList>
    </citation>
    <scope>NUCLEOTIDE SEQUENCE [LARGE SCALE MRNA] (ISOFORMS 1 AND 2)</scope>
    <source>
        <strain>C57BL/6J</strain>
        <tissue>Bone marrow</tissue>
        <tissue>Embryo</tissue>
        <tissue>Kidney</tissue>
        <tissue>Muellerian duct</tissue>
        <tissue>Small intestine</tissue>
    </source>
</reference>
<reference key="3">
    <citation type="journal article" date="2004" name="Genome Res.">
        <title>The status, quality, and expansion of the NIH full-length cDNA project: the Mammalian Gene Collection (MGC).</title>
        <authorList>
            <consortium name="The MGC Project Team"/>
        </authorList>
    </citation>
    <scope>NUCLEOTIDE SEQUENCE [LARGE SCALE MRNA] (ISOFORM 1)</scope>
</reference>
<reference key="4">
    <citation type="journal article" date="2008" name="Mol. Cell. Biol.">
        <title>Dual modification of BMAL1 by SUMO2/3 and ubiquitin promotes circadian activation of the CLOCK/BMAL1 complex.</title>
        <authorList>
            <person name="Lee J."/>
            <person name="Lee Y."/>
            <person name="Lee M.J."/>
            <person name="Park E."/>
            <person name="Kang S.H."/>
            <person name="Chung C.H."/>
            <person name="Lee K.H."/>
            <person name="Kim K."/>
        </authorList>
    </citation>
    <scope>SUBCELLULAR LOCATION</scope>
    <scope>INTERACTION WITH BMAL1</scope>
</reference>
<protein>
    <recommendedName>
        <fullName evidence="8">Small ubiquitin-related modifier 3</fullName>
        <shortName evidence="8">SUMO-3</shortName>
    </recommendedName>
    <alternativeName>
        <fullName evidence="9">SMT3 homolog 1</fullName>
    </alternativeName>
    <alternativeName>
        <fullName evidence="7">Ubiquitin-like protein SMT3A</fullName>
        <shortName evidence="7">Smt3A</shortName>
    </alternativeName>
</protein>